<gene>
    <name evidence="1" type="primary">rpiA</name>
    <name type="ordered locus">VV2850</name>
</gene>
<proteinExistence type="evidence at protein level"/>
<reference key="1">
    <citation type="journal article" date="2003" name="Genome Res.">
        <title>Comparative genome analysis of Vibrio vulnificus, a marine pathogen.</title>
        <authorList>
            <person name="Chen C.-Y."/>
            <person name="Wu K.-M."/>
            <person name="Chang Y.-C."/>
            <person name="Chang C.-H."/>
            <person name="Tsai H.-C."/>
            <person name="Liao T.-L."/>
            <person name="Liu Y.-M."/>
            <person name="Chen H.-J."/>
            <person name="Shen A.B.-T."/>
            <person name="Li J.-C."/>
            <person name="Su T.-L."/>
            <person name="Shao C.-P."/>
            <person name="Lee C.-T."/>
            <person name="Hor L.-I."/>
            <person name="Tsai S.-F."/>
        </authorList>
    </citation>
    <scope>NUCLEOTIDE SEQUENCE [LARGE SCALE GENOMIC DNA]</scope>
    <source>
        <strain>YJ016</strain>
    </source>
</reference>
<reference key="2">
    <citation type="journal article" date="2009" name="Mol. Cells">
        <title>Crystal structures of substrate and inhibitor complexes of ribose 5-phosphate isomerase A from Vibrio vulnificus YJ016.</title>
        <authorList>
            <person name="Kim T.G."/>
            <person name="Kwon T.H."/>
            <person name="Min K."/>
            <person name="Dong M.S."/>
            <person name="Park Y.I."/>
            <person name="Ban C."/>
        </authorList>
    </citation>
    <scope>X-RAY CRYSTALLOGRAPHY (2.00 ANGSTROMS) IN COMPLEX WITH SUBSTRATE ANALOGS</scope>
    <scope>SUBUNIT</scope>
</reference>
<feature type="chain" id="PRO_0000158494" description="Ribose-5-phosphate isomerase A">
    <location>
        <begin position="1"/>
        <end position="218"/>
    </location>
</feature>
<feature type="active site" description="Proton acceptor" evidence="1">
    <location>
        <position position="103"/>
    </location>
</feature>
<feature type="binding site">
    <location>
        <position position="7"/>
    </location>
    <ligand>
        <name>substrate</name>
    </ligand>
</feature>
<feature type="binding site" evidence="3">
    <location>
        <begin position="28"/>
        <end position="31"/>
    </location>
    <ligand>
        <name>substrate</name>
    </ligand>
</feature>
<feature type="binding site" evidence="3">
    <location>
        <begin position="81"/>
        <end position="84"/>
    </location>
    <ligand>
        <name>substrate</name>
    </ligand>
</feature>
<feature type="binding site" evidence="3">
    <location>
        <begin position="94"/>
        <end position="97"/>
    </location>
    <ligand>
        <name>substrate</name>
    </ligand>
</feature>
<feature type="binding site">
    <location>
        <position position="121"/>
    </location>
    <ligand>
        <name>substrate</name>
    </ligand>
</feature>
<feature type="helix" evidence="4">
    <location>
        <begin position="6"/>
        <end position="13"/>
    </location>
</feature>
<feature type="helix" evidence="4">
    <location>
        <begin position="14"/>
        <end position="17"/>
    </location>
</feature>
<feature type="strand" evidence="4">
    <location>
        <begin position="23"/>
        <end position="26"/>
    </location>
</feature>
<feature type="helix" evidence="4">
    <location>
        <begin position="30"/>
        <end position="40"/>
    </location>
</feature>
<feature type="helix" evidence="4">
    <location>
        <begin position="41"/>
        <end position="45"/>
    </location>
</feature>
<feature type="strand" evidence="4">
    <location>
        <begin position="48"/>
        <end position="52"/>
    </location>
</feature>
<feature type="helix" evidence="4">
    <location>
        <begin position="54"/>
        <end position="62"/>
    </location>
</feature>
<feature type="helix" evidence="4">
    <location>
        <begin position="70"/>
        <end position="72"/>
    </location>
</feature>
<feature type="strand" evidence="4">
    <location>
        <begin position="76"/>
        <end position="81"/>
    </location>
</feature>
<feature type="strand" evidence="4">
    <location>
        <begin position="84"/>
        <end position="86"/>
    </location>
</feature>
<feature type="strand" evidence="4">
    <location>
        <begin position="96"/>
        <end position="98"/>
    </location>
</feature>
<feature type="helix" evidence="4">
    <location>
        <begin position="100"/>
        <end position="109"/>
    </location>
</feature>
<feature type="strand" evidence="4">
    <location>
        <begin position="110"/>
        <end position="117"/>
    </location>
</feature>
<feature type="strand" evidence="4">
    <location>
        <begin position="124"/>
        <end position="126"/>
    </location>
</feature>
<feature type="strand" evidence="4">
    <location>
        <begin position="131"/>
        <end position="135"/>
    </location>
</feature>
<feature type="helix" evidence="4">
    <location>
        <begin position="137"/>
        <end position="139"/>
    </location>
</feature>
<feature type="helix" evidence="4">
    <location>
        <begin position="140"/>
        <end position="149"/>
    </location>
</feature>
<feature type="strand" evidence="4">
    <location>
        <begin position="153"/>
        <end position="156"/>
    </location>
</feature>
<feature type="strand" evidence="4">
    <location>
        <begin position="167"/>
        <end position="173"/>
    </location>
</feature>
<feature type="helix" evidence="4">
    <location>
        <begin position="179"/>
        <end position="187"/>
    </location>
</feature>
<feature type="strand" evidence="4">
    <location>
        <begin position="192"/>
        <end position="198"/>
    </location>
</feature>
<feature type="strand" evidence="4">
    <location>
        <begin position="204"/>
        <end position="208"/>
    </location>
</feature>
<feature type="strand" evidence="5">
    <location>
        <begin position="211"/>
        <end position="213"/>
    </location>
</feature>
<evidence type="ECO:0000255" key="1">
    <source>
        <dbReference type="HAMAP-Rule" id="MF_00170"/>
    </source>
</evidence>
<evidence type="ECO:0000269" key="2">
    <source>
    </source>
</evidence>
<evidence type="ECO:0000305" key="3"/>
<evidence type="ECO:0007829" key="4">
    <source>
        <dbReference type="PDB" id="3ENQ"/>
    </source>
</evidence>
<evidence type="ECO:0007829" key="5">
    <source>
        <dbReference type="PDB" id="3ENV"/>
    </source>
</evidence>
<keyword id="KW-0002">3D-structure</keyword>
<keyword id="KW-0413">Isomerase</keyword>
<dbReference type="EC" id="5.3.1.6" evidence="1"/>
<dbReference type="EMBL" id="BA000037">
    <property type="protein sequence ID" value="BAC95614.1"/>
    <property type="status" value="ALT_INIT"/>
    <property type="molecule type" value="Genomic_DNA"/>
</dbReference>
<dbReference type="RefSeq" id="WP_043877321.1">
    <property type="nucleotide sequence ID" value="NC_005139.1"/>
</dbReference>
<dbReference type="PDB" id="3ENQ">
    <property type="method" value="X-ray"/>
    <property type="resolution" value="2.00 A"/>
    <property type="chains" value="A/B=1-218"/>
</dbReference>
<dbReference type="PDB" id="3ENV">
    <property type="method" value="X-ray"/>
    <property type="resolution" value="2.00 A"/>
    <property type="chains" value="A/B=1-218"/>
</dbReference>
<dbReference type="PDB" id="3ENW">
    <property type="method" value="X-ray"/>
    <property type="resolution" value="2.00 A"/>
    <property type="chains" value="A/B=1-218"/>
</dbReference>
<dbReference type="PDBsum" id="3ENQ"/>
<dbReference type="PDBsum" id="3ENV"/>
<dbReference type="PDBsum" id="3ENW"/>
<dbReference type="SMR" id="Q7MHL9"/>
<dbReference type="STRING" id="672.VV93_v1c25580"/>
<dbReference type="KEGG" id="vvy:VV2850"/>
<dbReference type="eggNOG" id="COG0120">
    <property type="taxonomic scope" value="Bacteria"/>
</dbReference>
<dbReference type="HOGENOM" id="CLU_056590_1_1_6"/>
<dbReference type="BRENDA" id="5.3.1.6">
    <property type="organism ID" value="7786"/>
</dbReference>
<dbReference type="UniPathway" id="UPA00115">
    <property type="reaction ID" value="UER00412"/>
</dbReference>
<dbReference type="EvolutionaryTrace" id="Q7MHL9"/>
<dbReference type="Proteomes" id="UP000002675">
    <property type="component" value="Chromosome I"/>
</dbReference>
<dbReference type="GO" id="GO:0005829">
    <property type="term" value="C:cytosol"/>
    <property type="evidence" value="ECO:0007669"/>
    <property type="project" value="TreeGrafter"/>
</dbReference>
<dbReference type="GO" id="GO:0004751">
    <property type="term" value="F:ribose-5-phosphate isomerase activity"/>
    <property type="evidence" value="ECO:0007669"/>
    <property type="project" value="UniProtKB-UniRule"/>
</dbReference>
<dbReference type="GO" id="GO:0006014">
    <property type="term" value="P:D-ribose metabolic process"/>
    <property type="evidence" value="ECO:0007669"/>
    <property type="project" value="TreeGrafter"/>
</dbReference>
<dbReference type="GO" id="GO:0009052">
    <property type="term" value="P:pentose-phosphate shunt, non-oxidative branch"/>
    <property type="evidence" value="ECO:0007669"/>
    <property type="project" value="UniProtKB-UniRule"/>
</dbReference>
<dbReference type="CDD" id="cd01398">
    <property type="entry name" value="RPI_A"/>
    <property type="match status" value="1"/>
</dbReference>
<dbReference type="FunFam" id="3.30.70.260:FF:000004">
    <property type="entry name" value="Ribose-5-phosphate isomerase A"/>
    <property type="match status" value="1"/>
</dbReference>
<dbReference type="FunFam" id="3.40.50.1360:FF:000001">
    <property type="entry name" value="Ribose-5-phosphate isomerase A"/>
    <property type="match status" value="1"/>
</dbReference>
<dbReference type="Gene3D" id="3.30.70.260">
    <property type="match status" value="1"/>
</dbReference>
<dbReference type="Gene3D" id="3.40.50.1360">
    <property type="match status" value="1"/>
</dbReference>
<dbReference type="HAMAP" id="MF_00170">
    <property type="entry name" value="Rib_5P_isom_A"/>
    <property type="match status" value="1"/>
</dbReference>
<dbReference type="InterPro" id="IPR037171">
    <property type="entry name" value="NagB/RpiA_transferase-like"/>
</dbReference>
<dbReference type="InterPro" id="IPR020672">
    <property type="entry name" value="Ribose5P_isomerase_typA_subgr"/>
</dbReference>
<dbReference type="InterPro" id="IPR004788">
    <property type="entry name" value="Ribose5P_isomerase_type_A"/>
</dbReference>
<dbReference type="NCBIfam" id="NF001924">
    <property type="entry name" value="PRK00702.1"/>
    <property type="match status" value="1"/>
</dbReference>
<dbReference type="NCBIfam" id="TIGR00021">
    <property type="entry name" value="rpiA"/>
    <property type="match status" value="1"/>
</dbReference>
<dbReference type="PANTHER" id="PTHR11934">
    <property type="entry name" value="RIBOSE-5-PHOSPHATE ISOMERASE"/>
    <property type="match status" value="1"/>
</dbReference>
<dbReference type="PANTHER" id="PTHR11934:SF0">
    <property type="entry name" value="RIBOSE-5-PHOSPHATE ISOMERASE"/>
    <property type="match status" value="1"/>
</dbReference>
<dbReference type="Pfam" id="PF06026">
    <property type="entry name" value="Rib_5-P_isom_A"/>
    <property type="match status" value="1"/>
</dbReference>
<dbReference type="SUPFAM" id="SSF75445">
    <property type="entry name" value="D-ribose-5-phosphate isomerase (RpiA), lid domain"/>
    <property type="match status" value="1"/>
</dbReference>
<dbReference type="SUPFAM" id="SSF100950">
    <property type="entry name" value="NagB/RpiA/CoA transferase-like"/>
    <property type="match status" value="1"/>
</dbReference>
<name>RPIA_VIBVY</name>
<accession>Q7MHL9</accession>
<protein>
    <recommendedName>
        <fullName evidence="1">Ribose-5-phosphate isomerase A</fullName>
        <ecNumber evidence="1">5.3.1.6</ecNumber>
    </recommendedName>
    <alternativeName>
        <fullName evidence="1">Phosphoriboisomerase A</fullName>
        <shortName evidence="1">PRI</shortName>
    </alternativeName>
</protein>
<sequence length="218" mass="22985">MTQDEMKKAAGWAALKYVEKGSIVGVGTGSTVNHFIDALGTMSEEIKGAVSSSVASTEKLEALGIKIFDCNEVASLDIYVDGADEINADREMIKGGGAALTREKIVAAIADKFICIVDGTKAVDVLGTFPLPVEVIPMARSYVARQLVKLGGDPCYREGVITDNGNVILDVYGMKITNPKQLEDQINAIPGVVTVGLFAHRGADVVITGTPEGAKIEE</sequence>
<organism>
    <name type="scientific">Vibrio vulnificus (strain YJ016)</name>
    <dbReference type="NCBI Taxonomy" id="196600"/>
    <lineage>
        <taxon>Bacteria</taxon>
        <taxon>Pseudomonadati</taxon>
        <taxon>Pseudomonadota</taxon>
        <taxon>Gammaproteobacteria</taxon>
        <taxon>Vibrionales</taxon>
        <taxon>Vibrionaceae</taxon>
        <taxon>Vibrio</taxon>
    </lineage>
</organism>
<comment type="function">
    <text evidence="1">Catalyzes the reversible conversion of ribose-5-phosphate to ribulose 5-phosphate.</text>
</comment>
<comment type="catalytic activity">
    <reaction evidence="1">
        <text>aldehydo-D-ribose 5-phosphate = D-ribulose 5-phosphate</text>
        <dbReference type="Rhea" id="RHEA:14657"/>
        <dbReference type="ChEBI" id="CHEBI:58121"/>
        <dbReference type="ChEBI" id="CHEBI:58273"/>
        <dbReference type="EC" id="5.3.1.6"/>
    </reaction>
</comment>
<comment type="pathway">
    <text evidence="1">Carbohydrate degradation; pentose phosphate pathway; D-ribose 5-phosphate from D-ribulose 5-phosphate (non-oxidative stage): step 1/1.</text>
</comment>
<comment type="subunit">
    <text evidence="1 2">Homodimer.</text>
</comment>
<comment type="similarity">
    <text evidence="1">Belongs to the ribose 5-phosphate isomerase family.</text>
</comment>
<comment type="sequence caution" evidence="3">
    <conflict type="erroneous initiation">
        <sequence resource="EMBL-CDS" id="BAC95614"/>
    </conflict>
    <text>Extended N-terminus.</text>
</comment>